<evidence type="ECO:0000250" key="1">
    <source>
        <dbReference type="UniProtKB" id="O75340"/>
    </source>
</evidence>
<evidence type="ECO:0000255" key="2">
    <source>
        <dbReference type="PROSITE-ProRule" id="PRU00448"/>
    </source>
</evidence>
<evidence type="ECO:0000269" key="3">
    <source>
    </source>
</evidence>
<evidence type="ECO:0000269" key="4">
    <source>
    </source>
</evidence>
<evidence type="ECO:0000269" key="5">
    <source>
    </source>
</evidence>
<evidence type="ECO:0000269" key="6">
    <source>
    </source>
</evidence>
<evidence type="ECO:0000269" key="7">
    <source>
    </source>
</evidence>
<evidence type="ECO:0000269" key="8">
    <source>
    </source>
</evidence>
<evidence type="ECO:0000269" key="9">
    <source>
    </source>
</evidence>
<evidence type="ECO:0000303" key="10">
    <source>
    </source>
</evidence>
<evidence type="ECO:0000305" key="11"/>
<evidence type="ECO:0000305" key="12">
    <source>
    </source>
</evidence>
<evidence type="ECO:0007744" key="13">
    <source>
        <dbReference type="PDB" id="1HQV"/>
    </source>
</evidence>
<evidence type="ECO:0007744" key="14">
    <source>
        <dbReference type="PDB" id="5JJG"/>
    </source>
</evidence>
<evidence type="ECO:0007829" key="15">
    <source>
        <dbReference type="PDB" id="1HQV"/>
    </source>
</evidence>
<evidence type="ECO:0007829" key="16">
    <source>
        <dbReference type="PDB" id="5JJG"/>
    </source>
</evidence>
<dbReference type="EMBL" id="U49112">
    <property type="protein sequence ID" value="AAB38108.1"/>
    <property type="molecule type" value="mRNA"/>
</dbReference>
<dbReference type="EMBL" id="AK008610">
    <property type="protein sequence ID" value="BAB25775.1"/>
    <property type="molecule type" value="mRNA"/>
</dbReference>
<dbReference type="EMBL" id="AK028223">
    <property type="protein sequence ID" value="BAC25823.1"/>
    <property type="molecule type" value="mRNA"/>
</dbReference>
<dbReference type="EMBL" id="AK150335">
    <property type="protein sequence ID" value="BAE29477.1"/>
    <property type="molecule type" value="mRNA"/>
</dbReference>
<dbReference type="EMBL" id="BC040079">
    <property type="protein sequence ID" value="AAH40079.1"/>
    <property type="molecule type" value="mRNA"/>
</dbReference>
<dbReference type="EMBL" id="X14938">
    <property type="protein sequence ID" value="CAA33064.1"/>
    <property type="status" value="ALT_INIT"/>
    <property type="molecule type" value="mRNA"/>
</dbReference>
<dbReference type="CCDS" id="CCDS26642.1">
    <molecule id="P12815-1"/>
</dbReference>
<dbReference type="CCDS" id="CCDS88484.1">
    <molecule id="P12815-2"/>
</dbReference>
<dbReference type="RefSeq" id="NP_001346925.1">
    <molecule id="P12815-2"/>
    <property type="nucleotide sequence ID" value="NM_001359996.1"/>
</dbReference>
<dbReference type="RefSeq" id="NP_035181.1">
    <molecule id="P12815-1"/>
    <property type="nucleotide sequence ID" value="NM_011051.3"/>
</dbReference>
<dbReference type="RefSeq" id="XP_006517219.1">
    <property type="nucleotide sequence ID" value="XM_006517156.1"/>
</dbReference>
<dbReference type="PDB" id="1HQV">
    <property type="method" value="X-ray"/>
    <property type="resolution" value="2.30 A"/>
    <property type="chains" value="A=1-191"/>
</dbReference>
<dbReference type="PDB" id="5JJG">
    <property type="method" value="X-ray"/>
    <property type="resolution" value="1.72 A"/>
    <property type="chains" value="A=24-191"/>
</dbReference>
<dbReference type="PDBsum" id="1HQV"/>
<dbReference type="PDBsum" id="5JJG"/>
<dbReference type="SMR" id="P12815"/>
<dbReference type="BioGRID" id="202071">
    <property type="interactions" value="21"/>
</dbReference>
<dbReference type="ELM" id="P12815"/>
<dbReference type="FunCoup" id="P12815">
    <property type="interactions" value="3636"/>
</dbReference>
<dbReference type="IntAct" id="P12815">
    <property type="interactions" value="10"/>
</dbReference>
<dbReference type="MINT" id="P12815"/>
<dbReference type="STRING" id="10090.ENSMUSP00000022060"/>
<dbReference type="GlyGen" id="P12815">
    <property type="glycosylation" value="1 site, 1 O-linked glycan (1 site)"/>
</dbReference>
<dbReference type="PhosphoSitePlus" id="P12815"/>
<dbReference type="SwissPalm" id="P12815"/>
<dbReference type="jPOST" id="P12815"/>
<dbReference type="PaxDb" id="10090-ENSMUSP00000022060"/>
<dbReference type="PeptideAtlas" id="P12815"/>
<dbReference type="ProteomicsDB" id="288013">
    <molecule id="P12815-1"/>
</dbReference>
<dbReference type="ProteomicsDB" id="288014">
    <molecule id="P12815-2"/>
</dbReference>
<dbReference type="Pumba" id="P12815"/>
<dbReference type="Antibodypedia" id="36748">
    <property type="antibodies" value="326 antibodies from 34 providers"/>
</dbReference>
<dbReference type="DNASU" id="18570"/>
<dbReference type="Ensembl" id="ENSMUST00000022060.7">
    <molecule id="P12815-1"/>
    <property type="protein sequence ID" value="ENSMUSP00000022060.6"/>
    <property type="gene ID" value="ENSMUSG00000021576.7"/>
</dbReference>
<dbReference type="Ensembl" id="ENSMUST00000222759.2">
    <molecule id="P12815-2"/>
    <property type="protein sequence ID" value="ENSMUSP00000152458.2"/>
    <property type="gene ID" value="ENSMUSG00000021576.7"/>
</dbReference>
<dbReference type="GeneID" id="18570"/>
<dbReference type="KEGG" id="mmu:18570"/>
<dbReference type="UCSC" id="uc007rey.2">
    <molecule id="P12815-1"/>
    <property type="organism name" value="mouse"/>
</dbReference>
<dbReference type="AGR" id="MGI:109283"/>
<dbReference type="CTD" id="10016"/>
<dbReference type="MGI" id="MGI:109283">
    <property type="gene designation" value="Pdcd6"/>
</dbReference>
<dbReference type="VEuPathDB" id="HostDB:ENSMUSG00000021576"/>
<dbReference type="eggNOG" id="KOG0037">
    <property type="taxonomic scope" value="Eukaryota"/>
</dbReference>
<dbReference type="GeneTree" id="ENSGT00940000160982"/>
<dbReference type="HOGENOM" id="CLU_051357_1_1_1"/>
<dbReference type="InParanoid" id="P12815"/>
<dbReference type="OMA" id="FYNILMH"/>
<dbReference type="OrthoDB" id="186625at2759"/>
<dbReference type="PhylomeDB" id="P12815"/>
<dbReference type="TreeFam" id="TF314682"/>
<dbReference type="BioGRID-ORCS" id="18570">
    <property type="hits" value="1 hit in 78 CRISPR screens"/>
</dbReference>
<dbReference type="ChiTaRS" id="Pdcd6">
    <property type="organism name" value="mouse"/>
</dbReference>
<dbReference type="EvolutionaryTrace" id="P12815"/>
<dbReference type="PRO" id="PR:P12815"/>
<dbReference type="Proteomes" id="UP000000589">
    <property type="component" value="Chromosome 13"/>
</dbReference>
<dbReference type="RNAct" id="P12815">
    <property type="molecule type" value="protein"/>
</dbReference>
<dbReference type="Bgee" id="ENSMUSG00000021576">
    <property type="expression patterns" value="Expressed in small intestine Peyer's patch and 259 other cell types or tissues"/>
</dbReference>
<dbReference type="GO" id="GO:0030127">
    <property type="term" value="C:COPII vesicle coat"/>
    <property type="evidence" value="ECO:0000250"/>
    <property type="project" value="UniProtKB"/>
</dbReference>
<dbReference type="GO" id="GO:0031463">
    <property type="term" value="C:Cul3-RING ubiquitin ligase complex"/>
    <property type="evidence" value="ECO:0000250"/>
    <property type="project" value="UniProtKB"/>
</dbReference>
<dbReference type="GO" id="GO:0005737">
    <property type="term" value="C:cytoplasm"/>
    <property type="evidence" value="ECO:0000314"/>
    <property type="project" value="UniProtKB"/>
</dbReference>
<dbReference type="GO" id="GO:0005829">
    <property type="term" value="C:cytosol"/>
    <property type="evidence" value="ECO:0007669"/>
    <property type="project" value="Ensembl"/>
</dbReference>
<dbReference type="GO" id="GO:0070971">
    <property type="term" value="C:endoplasmic reticulum exit site"/>
    <property type="evidence" value="ECO:0000250"/>
    <property type="project" value="UniProtKB"/>
</dbReference>
<dbReference type="GO" id="GO:0005789">
    <property type="term" value="C:endoplasmic reticulum membrane"/>
    <property type="evidence" value="ECO:0007669"/>
    <property type="project" value="UniProtKB-SubCell"/>
</dbReference>
<dbReference type="GO" id="GO:0005768">
    <property type="term" value="C:endosome"/>
    <property type="evidence" value="ECO:0007669"/>
    <property type="project" value="UniProtKB-SubCell"/>
</dbReference>
<dbReference type="GO" id="GO:0005654">
    <property type="term" value="C:nucleoplasm"/>
    <property type="evidence" value="ECO:0007669"/>
    <property type="project" value="Ensembl"/>
</dbReference>
<dbReference type="GO" id="GO:0005634">
    <property type="term" value="C:nucleus"/>
    <property type="evidence" value="ECO:0000250"/>
    <property type="project" value="UniProtKB"/>
</dbReference>
<dbReference type="GO" id="GO:0048471">
    <property type="term" value="C:perinuclear region of cytoplasm"/>
    <property type="evidence" value="ECO:0007669"/>
    <property type="project" value="Ensembl"/>
</dbReference>
<dbReference type="GO" id="GO:0005509">
    <property type="term" value="F:calcium ion binding"/>
    <property type="evidence" value="ECO:0000315"/>
    <property type="project" value="UniProtKB"/>
</dbReference>
<dbReference type="GO" id="GO:0048306">
    <property type="term" value="F:calcium-dependent protein binding"/>
    <property type="evidence" value="ECO:0000353"/>
    <property type="project" value="UniProtKB"/>
</dbReference>
<dbReference type="GO" id="GO:0000287">
    <property type="term" value="F:magnesium ion binding"/>
    <property type="evidence" value="ECO:0000314"/>
    <property type="project" value="UniProtKB"/>
</dbReference>
<dbReference type="GO" id="GO:0046983">
    <property type="term" value="F:protein dimerization activity"/>
    <property type="evidence" value="ECO:0000353"/>
    <property type="project" value="UniProtKB"/>
</dbReference>
<dbReference type="GO" id="GO:0046982">
    <property type="term" value="F:protein heterodimerization activity"/>
    <property type="evidence" value="ECO:0007669"/>
    <property type="project" value="Ensembl"/>
</dbReference>
<dbReference type="GO" id="GO:0042803">
    <property type="term" value="F:protein homodimerization activity"/>
    <property type="evidence" value="ECO:0000314"/>
    <property type="project" value="UniProtKB"/>
</dbReference>
<dbReference type="GO" id="GO:0030674">
    <property type="term" value="F:protein-macromolecule adaptor activity"/>
    <property type="evidence" value="ECO:0000250"/>
    <property type="project" value="UniProtKB"/>
</dbReference>
<dbReference type="GO" id="GO:0043495">
    <property type="term" value="F:protein-membrane adaptor activity"/>
    <property type="evidence" value="ECO:0007669"/>
    <property type="project" value="Ensembl"/>
</dbReference>
<dbReference type="GO" id="GO:1990756">
    <property type="term" value="F:ubiquitin-like ligase-substrate adaptor activity"/>
    <property type="evidence" value="ECO:0007669"/>
    <property type="project" value="Ensembl"/>
</dbReference>
<dbReference type="GO" id="GO:0001525">
    <property type="term" value="P:angiogenesis"/>
    <property type="evidence" value="ECO:0007669"/>
    <property type="project" value="UniProtKB-KW"/>
</dbReference>
<dbReference type="GO" id="GO:0006915">
    <property type="term" value="P:apoptotic process"/>
    <property type="evidence" value="ECO:0000314"/>
    <property type="project" value="MGI"/>
</dbReference>
<dbReference type="GO" id="GO:0034605">
    <property type="term" value="P:cellular response to heat"/>
    <property type="evidence" value="ECO:0000250"/>
    <property type="project" value="UniProtKB"/>
</dbReference>
<dbReference type="GO" id="GO:0048208">
    <property type="term" value="P:COPII vesicle coating"/>
    <property type="evidence" value="ECO:0000250"/>
    <property type="project" value="UniProtKB"/>
</dbReference>
<dbReference type="GO" id="GO:0006888">
    <property type="term" value="P:endoplasmic reticulum to Golgi vesicle-mediated transport"/>
    <property type="evidence" value="ECO:0000250"/>
    <property type="project" value="UniProtKB"/>
</dbReference>
<dbReference type="GO" id="GO:0006886">
    <property type="term" value="P:intracellular protein transport"/>
    <property type="evidence" value="ECO:0000250"/>
    <property type="project" value="UniProtKB"/>
</dbReference>
<dbReference type="GO" id="GO:0051898">
    <property type="term" value="P:negative regulation of phosphatidylinositol 3-kinase/protein kinase B signal transduction"/>
    <property type="evidence" value="ECO:0000250"/>
    <property type="project" value="UniProtKB"/>
</dbReference>
<dbReference type="GO" id="GO:0032007">
    <property type="term" value="P:negative regulation of TOR signaling"/>
    <property type="evidence" value="ECO:0000250"/>
    <property type="project" value="UniProtKB"/>
</dbReference>
<dbReference type="GO" id="GO:0030948">
    <property type="term" value="P:negative regulation of vascular endothelial growth factor receptor signaling pathway"/>
    <property type="evidence" value="ECO:0000250"/>
    <property type="project" value="UniProtKB"/>
</dbReference>
<dbReference type="GO" id="GO:0014032">
    <property type="term" value="P:neural crest cell development"/>
    <property type="evidence" value="ECO:0000250"/>
    <property type="project" value="UniProtKB"/>
</dbReference>
<dbReference type="GO" id="GO:0014029">
    <property type="term" value="P:neural crest formation"/>
    <property type="evidence" value="ECO:0000250"/>
    <property type="project" value="UniProtKB"/>
</dbReference>
<dbReference type="GO" id="GO:0045766">
    <property type="term" value="P:positive regulation of angiogenesis"/>
    <property type="evidence" value="ECO:0000250"/>
    <property type="project" value="UniProtKB"/>
</dbReference>
<dbReference type="GO" id="GO:0043065">
    <property type="term" value="P:positive regulation of apoptotic process"/>
    <property type="evidence" value="ECO:0007669"/>
    <property type="project" value="Ensembl"/>
</dbReference>
<dbReference type="GO" id="GO:0010595">
    <property type="term" value="P:positive regulation of endothelial cell migration"/>
    <property type="evidence" value="ECO:0000250"/>
    <property type="project" value="UniProtKB"/>
</dbReference>
<dbReference type="GO" id="GO:0001938">
    <property type="term" value="P:positive regulation of endothelial cell proliferation"/>
    <property type="evidence" value="ECO:0000250"/>
    <property type="project" value="UniProtKB"/>
</dbReference>
<dbReference type="GO" id="GO:1902527">
    <property type="term" value="P:positive regulation of protein monoubiquitination"/>
    <property type="evidence" value="ECO:0000250"/>
    <property type="project" value="UniProtKB"/>
</dbReference>
<dbReference type="GO" id="GO:0051592">
    <property type="term" value="P:response to calcium ion"/>
    <property type="evidence" value="ECO:0000314"/>
    <property type="project" value="UniProtKB"/>
</dbReference>
<dbReference type="GO" id="GO:0036324">
    <property type="term" value="P:vascular endothelial growth factor receptor-2 signaling pathway"/>
    <property type="evidence" value="ECO:0000250"/>
    <property type="project" value="UniProtKB"/>
</dbReference>
<dbReference type="CDD" id="cd16183">
    <property type="entry name" value="EFh_PEF_ALG-2"/>
    <property type="match status" value="1"/>
</dbReference>
<dbReference type="FunFam" id="1.10.238.10:FF:000187">
    <property type="entry name" value="Programmed cell death protein 6"/>
    <property type="match status" value="1"/>
</dbReference>
<dbReference type="Gene3D" id="1.10.238.10">
    <property type="entry name" value="EF-hand"/>
    <property type="match status" value="1"/>
</dbReference>
<dbReference type="InterPro" id="IPR011992">
    <property type="entry name" value="EF-hand-dom_pair"/>
</dbReference>
<dbReference type="InterPro" id="IPR018247">
    <property type="entry name" value="EF_Hand_1_Ca_BS"/>
</dbReference>
<dbReference type="InterPro" id="IPR002048">
    <property type="entry name" value="EF_hand_dom"/>
</dbReference>
<dbReference type="InterPro" id="IPR051426">
    <property type="entry name" value="Peflin/Sorcin_CaBP"/>
</dbReference>
<dbReference type="PANTHER" id="PTHR46212">
    <property type="entry name" value="PEFLIN"/>
    <property type="match status" value="1"/>
</dbReference>
<dbReference type="PANTHER" id="PTHR46212:SF9">
    <property type="entry name" value="PROGRAMMED CELL DEATH PROTEIN 6"/>
    <property type="match status" value="1"/>
</dbReference>
<dbReference type="Pfam" id="PF13499">
    <property type="entry name" value="EF-hand_7"/>
    <property type="match status" value="2"/>
</dbReference>
<dbReference type="SMART" id="SM00054">
    <property type="entry name" value="EFh"/>
    <property type="match status" value="5"/>
</dbReference>
<dbReference type="SUPFAM" id="SSF47473">
    <property type="entry name" value="EF-hand"/>
    <property type="match status" value="1"/>
</dbReference>
<dbReference type="PROSITE" id="PS00018">
    <property type="entry name" value="EF_HAND_1"/>
    <property type="match status" value="2"/>
</dbReference>
<dbReference type="PROSITE" id="PS50222">
    <property type="entry name" value="EF_HAND_2"/>
    <property type="match status" value="3"/>
</dbReference>
<accession>P12815</accession>
<accession>Q545I0</accession>
<accession>Q61145</accession>
<keyword id="KW-0002">3D-structure</keyword>
<keyword id="KW-0007">Acetylation</keyword>
<keyword id="KW-0025">Alternative splicing</keyword>
<keyword id="KW-0037">Angiogenesis</keyword>
<keyword id="KW-0053">Apoptosis</keyword>
<keyword id="KW-0106">Calcium</keyword>
<keyword id="KW-0963">Cytoplasm</keyword>
<keyword id="KW-0968">Cytoplasmic vesicle</keyword>
<keyword id="KW-0256">Endoplasmic reticulum</keyword>
<keyword id="KW-0967">Endosome</keyword>
<keyword id="KW-0460">Magnesium</keyword>
<keyword id="KW-0472">Membrane</keyword>
<keyword id="KW-0479">Metal-binding</keyword>
<keyword id="KW-0539">Nucleus</keyword>
<keyword id="KW-1185">Reference proteome</keyword>
<keyword id="KW-0677">Repeat</keyword>
<reference key="1">
    <citation type="journal article" date="1996" name="Science">
        <title>Interfering with apoptosis: Ca(2+)-binding protein ALG-2 and Alzheimer's disease gene ALG-3.</title>
        <authorList>
            <person name="Vito P."/>
            <person name="Lacana E."/>
            <person name="D'Adamio L."/>
        </authorList>
    </citation>
    <scope>NUCLEOTIDE SEQUENCE [MRNA] (ISOFORM 1)</scope>
    <scope>FUNCTION</scope>
</reference>
<reference key="2">
    <citation type="journal article" date="2005" name="Science">
        <title>The transcriptional landscape of the mammalian genome.</title>
        <authorList>
            <person name="Carninci P."/>
            <person name="Kasukawa T."/>
            <person name="Katayama S."/>
            <person name="Gough J."/>
            <person name="Frith M.C."/>
            <person name="Maeda N."/>
            <person name="Oyama R."/>
            <person name="Ravasi T."/>
            <person name="Lenhard B."/>
            <person name="Wells C."/>
            <person name="Kodzius R."/>
            <person name="Shimokawa K."/>
            <person name="Bajic V.B."/>
            <person name="Brenner S.E."/>
            <person name="Batalov S."/>
            <person name="Forrest A.R."/>
            <person name="Zavolan M."/>
            <person name="Davis M.J."/>
            <person name="Wilming L.G."/>
            <person name="Aidinis V."/>
            <person name="Allen J.E."/>
            <person name="Ambesi-Impiombato A."/>
            <person name="Apweiler R."/>
            <person name="Aturaliya R.N."/>
            <person name="Bailey T.L."/>
            <person name="Bansal M."/>
            <person name="Baxter L."/>
            <person name="Beisel K.W."/>
            <person name="Bersano T."/>
            <person name="Bono H."/>
            <person name="Chalk A.M."/>
            <person name="Chiu K.P."/>
            <person name="Choudhary V."/>
            <person name="Christoffels A."/>
            <person name="Clutterbuck D.R."/>
            <person name="Crowe M.L."/>
            <person name="Dalla E."/>
            <person name="Dalrymple B.P."/>
            <person name="de Bono B."/>
            <person name="Della Gatta G."/>
            <person name="di Bernardo D."/>
            <person name="Down T."/>
            <person name="Engstrom P."/>
            <person name="Fagiolini M."/>
            <person name="Faulkner G."/>
            <person name="Fletcher C.F."/>
            <person name="Fukushima T."/>
            <person name="Furuno M."/>
            <person name="Futaki S."/>
            <person name="Gariboldi M."/>
            <person name="Georgii-Hemming P."/>
            <person name="Gingeras T.R."/>
            <person name="Gojobori T."/>
            <person name="Green R.E."/>
            <person name="Gustincich S."/>
            <person name="Harbers M."/>
            <person name="Hayashi Y."/>
            <person name="Hensch T.K."/>
            <person name="Hirokawa N."/>
            <person name="Hill D."/>
            <person name="Huminiecki L."/>
            <person name="Iacono M."/>
            <person name="Ikeo K."/>
            <person name="Iwama A."/>
            <person name="Ishikawa T."/>
            <person name="Jakt M."/>
            <person name="Kanapin A."/>
            <person name="Katoh M."/>
            <person name="Kawasawa Y."/>
            <person name="Kelso J."/>
            <person name="Kitamura H."/>
            <person name="Kitano H."/>
            <person name="Kollias G."/>
            <person name="Krishnan S.P."/>
            <person name="Kruger A."/>
            <person name="Kummerfeld S.K."/>
            <person name="Kurochkin I.V."/>
            <person name="Lareau L.F."/>
            <person name="Lazarevic D."/>
            <person name="Lipovich L."/>
            <person name="Liu J."/>
            <person name="Liuni S."/>
            <person name="McWilliam S."/>
            <person name="Madan Babu M."/>
            <person name="Madera M."/>
            <person name="Marchionni L."/>
            <person name="Matsuda H."/>
            <person name="Matsuzawa S."/>
            <person name="Miki H."/>
            <person name="Mignone F."/>
            <person name="Miyake S."/>
            <person name="Morris K."/>
            <person name="Mottagui-Tabar S."/>
            <person name="Mulder N."/>
            <person name="Nakano N."/>
            <person name="Nakauchi H."/>
            <person name="Ng P."/>
            <person name="Nilsson R."/>
            <person name="Nishiguchi S."/>
            <person name="Nishikawa S."/>
            <person name="Nori F."/>
            <person name="Ohara O."/>
            <person name="Okazaki Y."/>
            <person name="Orlando V."/>
            <person name="Pang K.C."/>
            <person name="Pavan W.J."/>
            <person name="Pavesi G."/>
            <person name="Pesole G."/>
            <person name="Petrovsky N."/>
            <person name="Piazza S."/>
            <person name="Reed J."/>
            <person name="Reid J.F."/>
            <person name="Ring B.Z."/>
            <person name="Ringwald M."/>
            <person name="Rost B."/>
            <person name="Ruan Y."/>
            <person name="Salzberg S.L."/>
            <person name="Sandelin A."/>
            <person name="Schneider C."/>
            <person name="Schoenbach C."/>
            <person name="Sekiguchi K."/>
            <person name="Semple C.A."/>
            <person name="Seno S."/>
            <person name="Sessa L."/>
            <person name="Sheng Y."/>
            <person name="Shibata Y."/>
            <person name="Shimada H."/>
            <person name="Shimada K."/>
            <person name="Silva D."/>
            <person name="Sinclair B."/>
            <person name="Sperling S."/>
            <person name="Stupka E."/>
            <person name="Sugiura K."/>
            <person name="Sultana R."/>
            <person name="Takenaka Y."/>
            <person name="Taki K."/>
            <person name="Tammoja K."/>
            <person name="Tan S.L."/>
            <person name="Tang S."/>
            <person name="Taylor M.S."/>
            <person name="Tegner J."/>
            <person name="Teichmann S.A."/>
            <person name="Ueda H.R."/>
            <person name="van Nimwegen E."/>
            <person name="Verardo R."/>
            <person name="Wei C.L."/>
            <person name="Yagi K."/>
            <person name="Yamanishi H."/>
            <person name="Zabarovsky E."/>
            <person name="Zhu S."/>
            <person name="Zimmer A."/>
            <person name="Hide W."/>
            <person name="Bult C."/>
            <person name="Grimmond S.M."/>
            <person name="Teasdale R.D."/>
            <person name="Liu E.T."/>
            <person name="Brusic V."/>
            <person name="Quackenbush J."/>
            <person name="Wahlestedt C."/>
            <person name="Mattick J.S."/>
            <person name="Hume D.A."/>
            <person name="Kai C."/>
            <person name="Sasaki D."/>
            <person name="Tomaru Y."/>
            <person name="Fukuda S."/>
            <person name="Kanamori-Katayama M."/>
            <person name="Suzuki M."/>
            <person name="Aoki J."/>
            <person name="Arakawa T."/>
            <person name="Iida J."/>
            <person name="Imamura K."/>
            <person name="Itoh M."/>
            <person name="Kato T."/>
            <person name="Kawaji H."/>
            <person name="Kawagashira N."/>
            <person name="Kawashima T."/>
            <person name="Kojima M."/>
            <person name="Kondo S."/>
            <person name="Konno H."/>
            <person name="Nakano K."/>
            <person name="Ninomiya N."/>
            <person name="Nishio T."/>
            <person name="Okada M."/>
            <person name="Plessy C."/>
            <person name="Shibata K."/>
            <person name="Shiraki T."/>
            <person name="Suzuki S."/>
            <person name="Tagami M."/>
            <person name="Waki K."/>
            <person name="Watahiki A."/>
            <person name="Okamura-Oho Y."/>
            <person name="Suzuki H."/>
            <person name="Kawai J."/>
            <person name="Hayashizaki Y."/>
        </authorList>
    </citation>
    <scope>NUCLEOTIDE SEQUENCE [LARGE SCALE MRNA] (ISOFORM 1)</scope>
    <source>
        <strain>C57BL/6J</strain>
        <tissue>Bone marrow</tissue>
        <tissue>Small intestine</tissue>
    </source>
</reference>
<reference key="3">
    <citation type="journal article" date="2004" name="Genome Res.">
        <title>The status, quality, and expansion of the NIH full-length cDNA project: the Mammalian Gene Collection (MGC).</title>
        <authorList>
            <consortium name="The MGC Project Team"/>
        </authorList>
    </citation>
    <scope>NUCLEOTIDE SEQUENCE [LARGE SCALE MRNA] (ISOFORM 1)</scope>
    <source>
        <strain>FVB/N</strain>
        <tissue>Mammary gland</tissue>
    </source>
</reference>
<reference key="4">
    <citation type="journal article" date="1989" name="Biochim. Biophys. Acta">
        <title>A partial cDNA for a novel protein which has a typical E-F hand structure.</title>
        <authorList>
            <person name="Kageyama H."/>
            <person name="Shimizu M."/>
            <person name="Hiwasa T."/>
            <person name="Sakiyama S."/>
        </authorList>
    </citation>
    <scope>NUCLEOTIDE SEQUENCE [MRNA] OF 44-181</scope>
    <source>
        <strain>BALB/cJ</strain>
        <tissue>Fibroblast</tissue>
    </source>
</reference>
<reference key="5">
    <citation type="journal article" date="1999" name="Cell Death Differ.">
        <title>Alix, a novel mouse protein undergoing calcium-dependent interaction with the apoptosis-linked-gene 2 (ALG-2) protein.</title>
        <authorList>
            <person name="Missotten M."/>
            <person name="Nichols A."/>
            <person name="Rieger K."/>
            <person name="Sadoul R."/>
        </authorList>
    </citation>
    <scope>SELF-ASSOCIATION</scope>
    <scope>INTERACTION WITH PDCD6IP</scope>
</reference>
<reference key="6">
    <citation type="journal article" date="2000" name="J. Biol. Chem.">
        <title>Two forms of the apoptosis-linked protein ALG-2 with different Ca(2+) affinities and target recognition.</title>
        <authorList>
            <person name="Tarabykina S."/>
            <person name="Moller A.L."/>
            <person name="Durussel I."/>
            <person name="Cox J."/>
            <person name="Berchtold M.W."/>
        </authorList>
    </citation>
    <scope>ALTERNATIVE SPLICING (ISOFORM 2)</scope>
    <scope>FUNCTION (ISOFORMS 1 AND 2)</scope>
    <scope>SELF-ASSOCIATION</scope>
    <scope>INTERACTION WITH PDCD6IP</scope>
</reference>
<reference key="7">
    <citation type="journal article" date="2003" name="J. Biol. Chem.">
        <title>Identification of targets for calcium signaling through the copine family of proteins. Characterization of a coiled-coil copine-binding motif.</title>
        <authorList>
            <person name="Tomsig J.L."/>
            <person name="Snyder S.L."/>
            <person name="Creutz C.E."/>
        </authorList>
    </citation>
    <scope>INTERACTION WITH CPNE4</scope>
</reference>
<reference key="8">
    <citation type="journal article" date="2007" name="Arch. Biochem. Biophys.">
        <title>The calcium binding protein ALG-2 binds and stabilizes Scotin, a p53-inducible gene product localized at the endoplasmic reticulum membrane.</title>
        <authorList>
            <person name="Draeby I."/>
            <person name="Woods Y.L."/>
            <person name="la Cour J.M."/>
            <person name="Mollerup J."/>
            <person name="Bourdon J.C."/>
            <person name="Berchtold M.W."/>
        </authorList>
    </citation>
    <scope>INTERACTION WITH SHISA5</scope>
</reference>
<reference key="9">
    <citation type="journal article" date="2002" name="Mol. Cell. Biol.">
        <title>Apoptosis-linked gene 2-deficient mice exhibit normal T-cell development and function.</title>
        <authorList>
            <person name="Jang I.K."/>
            <person name="Hu R."/>
            <person name="Lacana E."/>
            <person name="D'Adamio L."/>
            <person name="Gu H."/>
        </authorList>
    </citation>
    <scope>FUNCTION</scope>
    <scope>DISRUPTION PHENOTYPE</scope>
</reference>
<reference key="10">
    <citation type="journal article" date="2010" name="Cell">
        <title>A tissue-specific atlas of mouse protein phosphorylation and expression.</title>
        <authorList>
            <person name="Huttlin E.L."/>
            <person name="Jedrychowski M.P."/>
            <person name="Elias J.E."/>
            <person name="Goswami T."/>
            <person name="Rad R."/>
            <person name="Beausoleil S.A."/>
            <person name="Villen J."/>
            <person name="Haas W."/>
            <person name="Sowa M.E."/>
            <person name="Gygi S.P."/>
        </authorList>
    </citation>
    <scope>IDENTIFICATION BY MASS SPECTROMETRY [LARGE SCALE ANALYSIS]</scope>
    <source>
        <tissue>Brain</tissue>
        <tissue>Brown adipose tissue</tissue>
        <tissue>Heart</tissue>
        <tissue>Kidney</tissue>
        <tissue>Liver</tissue>
        <tissue>Lung</tissue>
        <tissue>Pancreas</tissue>
        <tissue>Spleen</tissue>
        <tissue>Testis</tissue>
    </source>
</reference>
<reference key="11">
    <citation type="journal article" date="2001" name="Structure">
        <title>Structure of apoptosis-linked protein ALG-2: insights into Ca2+-induced changes in penta-EF-hand proteins.</title>
        <authorList>
            <person name="Jia J."/>
            <person name="Tarabykina S."/>
            <person name="Hansen C."/>
            <person name="Berchtold M."/>
            <person name="Cygler M."/>
        </authorList>
    </citation>
    <scope>X-RAY CRYSTALLOGRAPHY (2.3 ANGSTROMS) IN COMPLEX WITH CALCIUM</scope>
    <scope>SUBUNIT</scope>
    <scope>INTERACTION WITH PDCD6IP</scope>
    <scope>DOMAIN</scope>
    <scope>FUNCTION</scope>
</reference>
<reference evidence="14" key="12">
    <citation type="journal article" date="2016" name="Biochemistry">
        <title>EF5 is the high-affinity Mg(2+) site in ALG-2.</title>
        <authorList>
            <person name="Tanner J.J."/>
            <person name="Frey B.B."/>
            <person name="Pemberton T."/>
            <person name="Henzl M.T."/>
        </authorList>
    </citation>
    <scope>X-RAY CRYSTALLOGRAPHY (1.72 ANGSTROMS) OF 24-191 IN COMPLEX WITH MAGNESIUM</scope>
    <scope>SUBUNIT</scope>
    <scope>DOMAIN</scope>
    <scope>MAGNESIUM-BINDING</scope>
    <scope>MUTAGENESIS OF ASP-169</scope>
    <scope>FUNCTION</scope>
</reference>
<feature type="initiator methionine" description="Removed" evidence="1">
    <location>
        <position position="1"/>
    </location>
</feature>
<feature type="chain" id="PRO_0000073730" description="Programmed cell death protein 6">
    <location>
        <begin position="2"/>
        <end position="191"/>
    </location>
</feature>
<feature type="domain" description="EF-hand 1" evidence="2">
    <location>
        <begin position="23"/>
        <end position="58"/>
    </location>
</feature>
<feature type="domain" description="EF-hand 2" evidence="11">
    <location>
        <begin position="59"/>
        <end position="89"/>
    </location>
</feature>
<feature type="domain" description="EF-hand 3" evidence="2">
    <location>
        <begin position="90"/>
        <end position="125"/>
    </location>
</feature>
<feature type="domain" description="EF-hand 4" evidence="11">
    <location>
        <begin position="126"/>
        <end position="161"/>
    </location>
</feature>
<feature type="domain" description="EF-hand 5" evidence="2">
    <location>
        <begin position="162"/>
        <end position="191"/>
    </location>
</feature>
<feature type="binding site" evidence="2 5 13">
    <location>
        <position position="36"/>
    </location>
    <ligand>
        <name>Ca(2+)</name>
        <dbReference type="ChEBI" id="CHEBI:29108"/>
        <label>1</label>
    </ligand>
</feature>
<feature type="binding site" evidence="2 5 13">
    <location>
        <position position="38"/>
    </location>
    <ligand>
        <name>Ca(2+)</name>
        <dbReference type="ChEBI" id="CHEBI:29108"/>
        <label>1</label>
    </ligand>
</feature>
<feature type="binding site" evidence="2 5 13">
    <location>
        <position position="40"/>
    </location>
    <ligand>
        <name>Ca(2+)</name>
        <dbReference type="ChEBI" id="CHEBI:29108"/>
        <label>1</label>
    </ligand>
</feature>
<feature type="binding site" evidence="5 13">
    <location>
        <position position="42"/>
    </location>
    <ligand>
        <name>Ca(2+)</name>
        <dbReference type="ChEBI" id="CHEBI:29108"/>
        <label>1</label>
    </ligand>
</feature>
<feature type="binding site" evidence="2 5 13">
    <location>
        <position position="47"/>
    </location>
    <ligand>
        <name>Ca(2+)</name>
        <dbReference type="ChEBI" id="CHEBI:29108"/>
        <label>1</label>
    </ligand>
</feature>
<feature type="binding site" evidence="2 5 13">
    <location>
        <position position="103"/>
    </location>
    <ligand>
        <name>Ca(2+)</name>
        <dbReference type="ChEBI" id="CHEBI:29108"/>
        <label>2</label>
    </ligand>
</feature>
<feature type="binding site" evidence="2 5 13">
    <location>
        <position position="105"/>
    </location>
    <ligand>
        <name>Ca(2+)</name>
        <dbReference type="ChEBI" id="CHEBI:29108"/>
        <label>2</label>
    </ligand>
</feature>
<feature type="binding site" evidence="2 5 13">
    <location>
        <position position="107"/>
    </location>
    <ligand>
        <name>Ca(2+)</name>
        <dbReference type="ChEBI" id="CHEBI:29108"/>
        <label>2</label>
    </ligand>
</feature>
<feature type="binding site" evidence="2 5 13">
    <location>
        <position position="109"/>
    </location>
    <ligand>
        <name>Ca(2+)</name>
        <dbReference type="ChEBI" id="CHEBI:29108"/>
        <label>2</label>
    </ligand>
</feature>
<feature type="binding site" evidence="2 5 13">
    <location>
        <position position="114"/>
    </location>
    <ligand>
        <name>Ca(2+)</name>
        <dbReference type="ChEBI" id="CHEBI:29108"/>
        <label>2</label>
    </ligand>
</feature>
<feature type="binding site" evidence="9 13 14">
    <location>
        <position position="169"/>
    </location>
    <ligand>
        <name>Mg(2+)</name>
        <dbReference type="ChEBI" id="CHEBI:18420"/>
    </ligand>
</feature>
<feature type="binding site" evidence="9 13 14">
    <location>
        <position position="171"/>
    </location>
    <ligand>
        <name>Mg(2+)</name>
        <dbReference type="ChEBI" id="CHEBI:18420"/>
    </ligand>
</feature>
<feature type="binding site" evidence="9 13 14">
    <location>
        <position position="173"/>
    </location>
    <ligand>
        <name>Mg(2+)</name>
        <dbReference type="ChEBI" id="CHEBI:18420"/>
    </ligand>
</feature>
<feature type="binding site" evidence="9 13 14">
    <location>
        <position position="175"/>
    </location>
    <ligand>
        <name>Mg(2+)</name>
        <dbReference type="ChEBI" id="CHEBI:18420"/>
    </ligand>
</feature>
<feature type="modified residue" description="N-acetylalanine" evidence="1">
    <location>
        <position position="2"/>
    </location>
</feature>
<feature type="splice variant" id="VSP_047715" description="In isoform 2." evidence="11">
    <location>
        <begin position="121"/>
        <end position="122"/>
    </location>
</feature>
<feature type="mutagenesis site" description="Abolishes magnesium and calcium-binding to the EF-hand 5 domain (EF5)." evidence="9">
    <original>D</original>
    <variation>A</variation>
    <location>
        <position position="169"/>
    </location>
</feature>
<feature type="helix" evidence="16">
    <location>
        <begin position="25"/>
        <end position="35"/>
    </location>
</feature>
<feature type="strand" evidence="15">
    <location>
        <begin position="41"/>
        <end position="43"/>
    </location>
</feature>
<feature type="helix" evidence="16">
    <location>
        <begin position="45"/>
        <end position="51"/>
    </location>
</feature>
<feature type="strand" evidence="16">
    <location>
        <begin position="55"/>
        <end position="58"/>
    </location>
</feature>
<feature type="helix" evidence="16">
    <location>
        <begin position="62"/>
        <end position="72"/>
    </location>
</feature>
<feature type="strand" evidence="16">
    <location>
        <begin position="74"/>
        <end position="80"/>
    </location>
</feature>
<feature type="helix" evidence="16">
    <location>
        <begin position="82"/>
        <end position="102"/>
    </location>
</feature>
<feature type="strand" evidence="16">
    <location>
        <begin position="107"/>
        <end position="110"/>
    </location>
</feature>
<feature type="helix" evidence="16">
    <location>
        <begin position="112"/>
        <end position="121"/>
    </location>
</feature>
<feature type="helix" evidence="16">
    <location>
        <begin position="128"/>
        <end position="138"/>
    </location>
</feature>
<feature type="strand" evidence="16">
    <location>
        <begin position="143"/>
        <end position="147"/>
    </location>
</feature>
<feature type="helix" evidence="16">
    <location>
        <begin position="148"/>
        <end position="168"/>
    </location>
</feature>
<feature type="helix" evidence="16">
    <location>
        <begin position="180"/>
        <end position="190"/>
    </location>
</feature>
<name>PDCD6_MOUSE</name>
<sequence length="191" mass="21867">MAAYSYRPGPGGGPGPAAGAALPDQSFLWNVFQRVDKDRSGVISDNELQQALSNGTWTPFNPVTVRSIISMFDRENKAGVNFSEFTGVWKYITDWQNVFRTYDRDNSGMIDKNELKQALSGFGYRLSDQFHDILIRKFDRQGRGQIAFDDFIQGCIVLQRLTDIFRRYDTDQDGWIQVSYEQYLSMVFSIV</sequence>
<organism>
    <name type="scientific">Mus musculus</name>
    <name type="common">Mouse</name>
    <dbReference type="NCBI Taxonomy" id="10090"/>
    <lineage>
        <taxon>Eukaryota</taxon>
        <taxon>Metazoa</taxon>
        <taxon>Chordata</taxon>
        <taxon>Craniata</taxon>
        <taxon>Vertebrata</taxon>
        <taxon>Euteleostomi</taxon>
        <taxon>Mammalia</taxon>
        <taxon>Eutheria</taxon>
        <taxon>Euarchontoglires</taxon>
        <taxon>Glires</taxon>
        <taxon>Rodentia</taxon>
        <taxon>Myomorpha</taxon>
        <taxon>Muroidea</taxon>
        <taxon>Muridae</taxon>
        <taxon>Murinae</taxon>
        <taxon>Mus</taxon>
        <taxon>Mus</taxon>
    </lineage>
</organism>
<comment type="function">
    <text evidence="1 4 5 6 9 12">Calcium sensor that plays a key role in processes such as endoplasmic reticulum (ER)-Golgi vesicular transport, endosomal biogenesis or membrane repair (PubMed:10744743, PubMed:11525164, PubMed:27541325). Acts as an adapter that bridges unrelated proteins or stabilizes weak protein-protein complexes in response to calcium: calcium-binding triggers exposure of apolar surface, promoting interaction with different sets of proteins thanks to 3 different hydrophobic pockets, leading to translocation to membranes (PubMed:10744743, PubMed:11525164, PubMed:27541325). Involved in ER-Golgi transport by promoting the association between PDCD6IP and TSG101, thereby bridging together the ESCRT-III and ESCRT-I complexes (PubMed:10744743, PubMed:11525164, PubMed:27541325). Together with PEF1, acts as a calcium-dependent adapter for the BCR(KLHL12) complex, a complex involved in ER-Golgi transport by regulating the size of COPII coats (By similarity). In response to cytosolic calcium increase, the heterodimer formed with PEF1 interacts with, and bridges together the BCR(KLHL12) complex and SEC31 (SEC31A or SEC31B), promoting monoubiquitination of SEC31 and subsequent collagen export, which is required for neural crest specification (By similarity). Involved in the regulation of the distribution and function of MCOLN1 in the endosomal pathway (By similarity). Promotes localization and polymerization of TFG at endoplasmic reticulum exit site (By similarity). Required for T-cell receptor-, Fas-, and glucocorticoid-induced apoptosis (PubMed:8560270). May mediate Ca(2+)-regulated signals along the death pathway: interaction with DAPK1 can accelerate apoptotic cell death by increasing caspase-3 activity (By similarity). Its role in apoptosis may however be indirect, as suggested by knockout experiments (PubMed:12024023). May inhibit KDR/VEGFR2-dependent angiogenesis; the function involves inhibition of VEGF-induced phosphorylation of the Akt signaling pathway (By similarity).</text>
</comment>
<comment type="function">
    <molecule>Isoform 2</molecule>
    <text evidence="4">Has a lower Ca(2+) affinity than isoform 1 (PubMed:10744743).</text>
</comment>
<comment type="subunit">
    <text evidence="1 3 4 5 7 8 9">Homodimer and heterodimer; heterodimerizes (via the EF-hand 5) with PEF1 (PubMed:10200558, PubMed:11525164, PubMed:27541325). Isoform 1 and isoform 2 self-associate; probably forming homodimers (By similarity). Interacts with CPNE4 (via VWFA domain) (PubMed:12522145). Interacts with PDCD6IP; the interaction is calcium-dependent (PubMed:10200558, PubMed:10744743, PubMed:11525164). Interacts with RBM22 (By similarity). Interacts with PLSCR4 (By similarity). Interacts with ANXA7 and TSG101 (By similarity). Interacts with DAPK1 (By similarity). Interacts with SEC31A; the interaction is calcium-dependent and promotes monoubiquitination of SEC31A (By similarity). Interacts with ANXA11 (via N-terminus); the interaction is calcium-dependent (By similarity). Interacts with PLSCR3 (via N-terminus); the interaction is calcium-dependent (By similarity). Interacts with MCOLN1; the interaction is calcium-dependent (By similarity). Interacts with KDR; the interaction is calcium-dependent (By similarity). Interacts with HEBP2; the interaction is calcium-dependent (By similarity). Interacts with TFG (By similarity). Isoform 1: Interacts with SHISA5, leading to stabilize it (PubMed:17889823). Isoform 2: Does not interact with SHISA5 (PubMed:17889823). Isoform 2: Does not interact with PDCD6IP, TSG101, ANXA7 and ANXA11 (PubMed:10744743).</text>
</comment>
<comment type="interaction">
    <interactant intactId="EBI-309164">
        <id>P12815</id>
    </interactant>
    <interactant intactId="EBI-494743">
        <id>P25445</id>
        <label>FAS</label>
    </interactant>
    <organismsDiffer>true</organismsDiffer>
    <experiments>2</experiments>
</comment>
<comment type="interaction">
    <interactant intactId="EBI-309164">
        <id>P12815</id>
    </interactant>
    <interactant intactId="EBI-2115556">
        <id>Q8N114</id>
        <label>SHISA5</label>
    </interactant>
    <organismsDiffer>true</organismsDiffer>
    <experiments>5</experiments>
</comment>
<comment type="subcellular location">
    <subcellularLocation>
        <location evidence="1">Endoplasmic reticulum membrane</location>
        <topology evidence="1">Peripheral membrane protein</topology>
    </subcellularLocation>
    <subcellularLocation>
        <location evidence="1">Cytoplasmic vesicle</location>
        <location evidence="1">COPII-coated vesicle membrane</location>
    </subcellularLocation>
    <subcellularLocation>
        <location evidence="1">Cytoplasm</location>
    </subcellularLocation>
    <subcellularLocation>
        <location evidence="1">Nucleus</location>
    </subcellularLocation>
    <subcellularLocation>
        <location evidence="1">Endosome</location>
    </subcellularLocation>
    <text evidence="1">Interaction with RBM22 induces relocalization from the cytoplasm to the nucleus. Translocated from the cytoplasm to the nucleus after heat shock cell treatment. Accumulates in cytoplasmic vesicle-like organelles after heat shock treatment, which may represent stress granules. In response to calcium increase, relocates from cytoplasm to COPII vesicle coat. Localizes to endoplasmic reticulum exit site (ERES).</text>
</comment>
<comment type="alternative products">
    <event type="alternative splicing"/>
    <isoform>
        <id>P12815-1</id>
        <name>1</name>
        <name>ALG-2,5</name>
        <sequence type="displayed"/>
    </isoform>
    <isoform>
        <id>P12815-2</id>
        <name>2</name>
        <name>ALG-2,1</name>
        <sequence type="described" ref="VSP_047715"/>
    </isoform>
</comment>
<comment type="domain">
    <text evidence="1">Interacts with different set of proteins thanks to 3 different hydrophobic pockets. Hydrophobic pockets 1 and 2, which mediate interaction with PDCD6IP, are largely formed by residues from EF-hand 3 (EF3) to 5 (EF5), as well as by Tyr-180 (EF5) of a dimerizing molecule (Pocket 1) and from EF-hand (EF2) to 4 (EF4) (Pocket 2). Hydrophobic pocket 3, which mediates interaction with SEC31A, is mainly formed by residues from EF-hand 1 (EF1) to 3 (EF3).</text>
</comment>
<comment type="domain">
    <text evidence="5 9 11">EF-hand 1 (EF1) and 3 (EF3) are the high-affinity calcium-binding sites, while EF-hand 5 (EF5) binds calcium with low-affinity (PubMed:11525164). A one-residue insertion in the EF5-binding loop prevents the glutamyl residue at the C-terminal end of the loop from serving as the canonical bidentate calcium ligand (PubMed:11525164). EF5 acts as a high-affinity magnesium-binding domain instead (PubMed:27541325). Magnesium, may affect dimerization (PubMed:27541325). EF5 may bind either calcium or magnesium depending on the context.</text>
</comment>
<comment type="disruption phenotype">
    <text evidence="6">No visible phenotype (PubMed:12024023). Mice develop normally and display no obvious immune defect (PubMed:12024023). T-cells retain susceptibility to apoptotic stimuli (PubMed:12024023).</text>
</comment>
<comment type="sequence caution" evidence="11">
    <conflict type="erroneous initiation">
        <sequence resource="EMBL-CDS" id="CAA33064"/>
    </conflict>
    <text>Extended N-terminus.</text>
</comment>
<gene>
    <name type="primary">Pdcd6</name>
    <name evidence="10" type="synonym">Alg2</name>
</gene>
<protein>
    <recommendedName>
        <fullName>Programmed cell death protein 6</fullName>
    </recommendedName>
    <alternativeName>
        <fullName>ALG-257</fullName>
    </alternativeName>
    <alternativeName>
        <fullName evidence="10">Apoptosis-linked gene 2 protein</fullName>
        <shortName evidence="10">ALG-2</shortName>
    </alternativeName>
    <alternativeName>
        <fullName>PMP41</fullName>
    </alternativeName>
</protein>
<proteinExistence type="evidence at protein level"/>